<evidence type="ECO:0000255" key="1">
    <source>
        <dbReference type="HAMAP-Rule" id="MF_00402"/>
    </source>
</evidence>
<evidence type="ECO:0000305" key="2"/>
<comment type="function">
    <text evidence="1">This protein is located at the 30S-50S ribosomal subunit interface and may play a role in the structure and function of the aminoacyl-tRNA binding site.</text>
</comment>
<comment type="similarity">
    <text evidence="1">Belongs to the bacterial ribosomal protein bL19 family.</text>
</comment>
<gene>
    <name evidence="1" type="primary">rplS</name>
    <name type="ordered locus">Mvan_2192</name>
</gene>
<keyword id="KW-0687">Ribonucleoprotein</keyword>
<keyword id="KW-0689">Ribosomal protein</keyword>
<protein>
    <recommendedName>
        <fullName evidence="1">Large ribosomal subunit protein bL19</fullName>
    </recommendedName>
    <alternativeName>
        <fullName evidence="2">50S ribosomal protein L19</fullName>
    </alternativeName>
</protein>
<organism>
    <name type="scientific">Mycolicibacterium vanbaalenii (strain DSM 7251 / JCM 13017 / BCRC 16820 / KCTC 9966 / NRRL B-24157 / PYR-1)</name>
    <name type="common">Mycobacterium vanbaalenii</name>
    <dbReference type="NCBI Taxonomy" id="350058"/>
    <lineage>
        <taxon>Bacteria</taxon>
        <taxon>Bacillati</taxon>
        <taxon>Actinomycetota</taxon>
        <taxon>Actinomycetes</taxon>
        <taxon>Mycobacteriales</taxon>
        <taxon>Mycobacteriaceae</taxon>
        <taxon>Mycolicibacterium</taxon>
    </lineage>
</organism>
<proteinExistence type="inferred from homology"/>
<name>RL19_MYCVP</name>
<dbReference type="EMBL" id="CP000511">
    <property type="protein sequence ID" value="ABM13007.1"/>
    <property type="molecule type" value="Genomic_DNA"/>
</dbReference>
<dbReference type="RefSeq" id="WP_011779420.1">
    <property type="nucleotide sequence ID" value="NZ_JACKSD010000001.1"/>
</dbReference>
<dbReference type="SMR" id="A1T757"/>
<dbReference type="STRING" id="350058.Mvan_2192"/>
<dbReference type="KEGG" id="mva:Mvan_2192"/>
<dbReference type="eggNOG" id="COG0335">
    <property type="taxonomic scope" value="Bacteria"/>
</dbReference>
<dbReference type="HOGENOM" id="CLU_103507_2_1_11"/>
<dbReference type="Proteomes" id="UP000009159">
    <property type="component" value="Chromosome"/>
</dbReference>
<dbReference type="GO" id="GO:0022625">
    <property type="term" value="C:cytosolic large ribosomal subunit"/>
    <property type="evidence" value="ECO:0007669"/>
    <property type="project" value="TreeGrafter"/>
</dbReference>
<dbReference type="GO" id="GO:0003735">
    <property type="term" value="F:structural constituent of ribosome"/>
    <property type="evidence" value="ECO:0007669"/>
    <property type="project" value="InterPro"/>
</dbReference>
<dbReference type="GO" id="GO:0006412">
    <property type="term" value="P:translation"/>
    <property type="evidence" value="ECO:0007669"/>
    <property type="project" value="UniProtKB-UniRule"/>
</dbReference>
<dbReference type="FunFam" id="2.30.30.790:FF:000001">
    <property type="entry name" value="50S ribosomal protein L19"/>
    <property type="match status" value="1"/>
</dbReference>
<dbReference type="Gene3D" id="2.30.30.790">
    <property type="match status" value="1"/>
</dbReference>
<dbReference type="HAMAP" id="MF_00402">
    <property type="entry name" value="Ribosomal_bL19"/>
    <property type="match status" value="1"/>
</dbReference>
<dbReference type="InterPro" id="IPR001857">
    <property type="entry name" value="Ribosomal_bL19"/>
</dbReference>
<dbReference type="InterPro" id="IPR018257">
    <property type="entry name" value="Ribosomal_bL19_CS"/>
</dbReference>
<dbReference type="InterPro" id="IPR038657">
    <property type="entry name" value="Ribosomal_bL19_sf"/>
</dbReference>
<dbReference type="InterPro" id="IPR008991">
    <property type="entry name" value="Translation_prot_SH3-like_sf"/>
</dbReference>
<dbReference type="NCBIfam" id="TIGR01024">
    <property type="entry name" value="rplS_bact"/>
    <property type="match status" value="1"/>
</dbReference>
<dbReference type="PANTHER" id="PTHR15680:SF9">
    <property type="entry name" value="LARGE RIBOSOMAL SUBUNIT PROTEIN BL19M"/>
    <property type="match status" value="1"/>
</dbReference>
<dbReference type="PANTHER" id="PTHR15680">
    <property type="entry name" value="RIBOSOMAL PROTEIN L19"/>
    <property type="match status" value="1"/>
</dbReference>
<dbReference type="Pfam" id="PF01245">
    <property type="entry name" value="Ribosomal_L19"/>
    <property type="match status" value="1"/>
</dbReference>
<dbReference type="PIRSF" id="PIRSF002191">
    <property type="entry name" value="Ribosomal_L19"/>
    <property type="match status" value="1"/>
</dbReference>
<dbReference type="PRINTS" id="PR00061">
    <property type="entry name" value="RIBOSOMALL19"/>
</dbReference>
<dbReference type="SUPFAM" id="SSF50104">
    <property type="entry name" value="Translation proteins SH3-like domain"/>
    <property type="match status" value="1"/>
</dbReference>
<dbReference type="PROSITE" id="PS01015">
    <property type="entry name" value="RIBOSOMAL_L19"/>
    <property type="match status" value="1"/>
</dbReference>
<accession>A1T757</accession>
<sequence length="113" mass="12851">MNTLDFVDQSSLRDDVPAFGPGDTVNVHVKVIEGSKERIQVFKGVVLRRQGGGVRETFTVRKESYGVGVERTFPVHSPNIDHIDIVSRGDVRRAKLYYLRELRGKKAKIKEKR</sequence>
<feature type="chain" id="PRO_1000049706" description="Large ribosomal subunit protein bL19">
    <location>
        <begin position="1"/>
        <end position="113"/>
    </location>
</feature>
<reference key="1">
    <citation type="submission" date="2006-12" db="EMBL/GenBank/DDBJ databases">
        <title>Complete sequence of Mycobacterium vanbaalenii PYR-1.</title>
        <authorList>
            <consortium name="US DOE Joint Genome Institute"/>
            <person name="Copeland A."/>
            <person name="Lucas S."/>
            <person name="Lapidus A."/>
            <person name="Barry K."/>
            <person name="Detter J.C."/>
            <person name="Glavina del Rio T."/>
            <person name="Hammon N."/>
            <person name="Israni S."/>
            <person name="Dalin E."/>
            <person name="Tice H."/>
            <person name="Pitluck S."/>
            <person name="Singan V."/>
            <person name="Schmutz J."/>
            <person name="Larimer F."/>
            <person name="Land M."/>
            <person name="Hauser L."/>
            <person name="Kyrpides N."/>
            <person name="Anderson I.J."/>
            <person name="Miller C."/>
            <person name="Richardson P."/>
        </authorList>
    </citation>
    <scope>NUCLEOTIDE SEQUENCE [LARGE SCALE GENOMIC DNA]</scope>
    <source>
        <strain>DSM 7251 / JCM 13017 / BCRC 16820 / KCTC 9966 / NRRL B-24157 / PYR-1</strain>
    </source>
</reference>